<gene>
    <name evidence="1" type="primary">rpmI</name>
    <name type="ordered locus">STER_1088</name>
</gene>
<name>RL35_STRTD</name>
<keyword id="KW-0687">Ribonucleoprotein</keyword>
<keyword id="KW-0689">Ribosomal protein</keyword>
<accession>Q03KJ0</accession>
<proteinExistence type="inferred from homology"/>
<dbReference type="EMBL" id="CP000419">
    <property type="protein sequence ID" value="ABJ66282.1"/>
    <property type="molecule type" value="Genomic_DNA"/>
</dbReference>
<dbReference type="RefSeq" id="WP_002950904.1">
    <property type="nucleotide sequence ID" value="NC_008532.1"/>
</dbReference>
<dbReference type="SMR" id="Q03KJ0"/>
<dbReference type="GeneID" id="66898929"/>
<dbReference type="KEGG" id="ste:STER_1088"/>
<dbReference type="HOGENOM" id="CLU_169643_3_0_9"/>
<dbReference type="GO" id="GO:0022625">
    <property type="term" value="C:cytosolic large ribosomal subunit"/>
    <property type="evidence" value="ECO:0007669"/>
    <property type="project" value="TreeGrafter"/>
</dbReference>
<dbReference type="GO" id="GO:0003735">
    <property type="term" value="F:structural constituent of ribosome"/>
    <property type="evidence" value="ECO:0007669"/>
    <property type="project" value="InterPro"/>
</dbReference>
<dbReference type="GO" id="GO:0006412">
    <property type="term" value="P:translation"/>
    <property type="evidence" value="ECO:0007669"/>
    <property type="project" value="UniProtKB-UniRule"/>
</dbReference>
<dbReference type="FunFam" id="4.10.410.60:FF:000001">
    <property type="entry name" value="50S ribosomal protein L35"/>
    <property type="match status" value="1"/>
</dbReference>
<dbReference type="Gene3D" id="4.10.410.60">
    <property type="match status" value="1"/>
</dbReference>
<dbReference type="HAMAP" id="MF_00514">
    <property type="entry name" value="Ribosomal_bL35"/>
    <property type="match status" value="1"/>
</dbReference>
<dbReference type="InterPro" id="IPR001706">
    <property type="entry name" value="Ribosomal_bL35"/>
</dbReference>
<dbReference type="InterPro" id="IPR021137">
    <property type="entry name" value="Ribosomal_bL35-like"/>
</dbReference>
<dbReference type="InterPro" id="IPR018265">
    <property type="entry name" value="Ribosomal_bL35_CS"/>
</dbReference>
<dbReference type="InterPro" id="IPR037229">
    <property type="entry name" value="Ribosomal_bL35_sf"/>
</dbReference>
<dbReference type="NCBIfam" id="TIGR00001">
    <property type="entry name" value="rpmI_bact"/>
    <property type="match status" value="1"/>
</dbReference>
<dbReference type="PANTHER" id="PTHR33343">
    <property type="entry name" value="54S RIBOSOMAL PROTEIN BL35M"/>
    <property type="match status" value="1"/>
</dbReference>
<dbReference type="PANTHER" id="PTHR33343:SF1">
    <property type="entry name" value="LARGE RIBOSOMAL SUBUNIT PROTEIN BL35M"/>
    <property type="match status" value="1"/>
</dbReference>
<dbReference type="Pfam" id="PF01632">
    <property type="entry name" value="Ribosomal_L35p"/>
    <property type="match status" value="1"/>
</dbReference>
<dbReference type="PRINTS" id="PR00064">
    <property type="entry name" value="RIBOSOMALL35"/>
</dbReference>
<dbReference type="SUPFAM" id="SSF143034">
    <property type="entry name" value="L35p-like"/>
    <property type="match status" value="1"/>
</dbReference>
<dbReference type="PROSITE" id="PS00936">
    <property type="entry name" value="RIBOSOMAL_L35"/>
    <property type="match status" value="1"/>
</dbReference>
<protein>
    <recommendedName>
        <fullName evidence="1">Large ribosomal subunit protein bL35</fullName>
    </recommendedName>
    <alternativeName>
        <fullName evidence="3">50S ribosomal protein L35</fullName>
    </alternativeName>
</protein>
<organism>
    <name type="scientific">Streptococcus thermophilus (strain ATCC BAA-491 / LMD-9)</name>
    <dbReference type="NCBI Taxonomy" id="322159"/>
    <lineage>
        <taxon>Bacteria</taxon>
        <taxon>Bacillati</taxon>
        <taxon>Bacillota</taxon>
        <taxon>Bacilli</taxon>
        <taxon>Lactobacillales</taxon>
        <taxon>Streptococcaceae</taxon>
        <taxon>Streptococcus</taxon>
    </lineage>
</organism>
<sequence>MPKQKTHRASAKRFKRTGSGGLKRFRAFTSHRFHGKTKKQRRHLRKASMVHPGDFKRIKSMVSQMR</sequence>
<comment type="similarity">
    <text evidence="1">Belongs to the bacterial ribosomal protein bL35 family.</text>
</comment>
<reference key="1">
    <citation type="journal article" date="2006" name="Proc. Natl. Acad. Sci. U.S.A.">
        <title>Comparative genomics of the lactic acid bacteria.</title>
        <authorList>
            <person name="Makarova K.S."/>
            <person name="Slesarev A."/>
            <person name="Wolf Y.I."/>
            <person name="Sorokin A."/>
            <person name="Mirkin B."/>
            <person name="Koonin E.V."/>
            <person name="Pavlov A."/>
            <person name="Pavlova N."/>
            <person name="Karamychev V."/>
            <person name="Polouchine N."/>
            <person name="Shakhova V."/>
            <person name="Grigoriev I."/>
            <person name="Lou Y."/>
            <person name="Rohksar D."/>
            <person name="Lucas S."/>
            <person name="Huang K."/>
            <person name="Goodstein D.M."/>
            <person name="Hawkins T."/>
            <person name="Plengvidhya V."/>
            <person name="Welker D."/>
            <person name="Hughes J."/>
            <person name="Goh Y."/>
            <person name="Benson A."/>
            <person name="Baldwin K."/>
            <person name="Lee J.-H."/>
            <person name="Diaz-Muniz I."/>
            <person name="Dosti B."/>
            <person name="Smeianov V."/>
            <person name="Wechter W."/>
            <person name="Barabote R."/>
            <person name="Lorca G."/>
            <person name="Altermann E."/>
            <person name="Barrangou R."/>
            <person name="Ganesan B."/>
            <person name="Xie Y."/>
            <person name="Rawsthorne H."/>
            <person name="Tamir D."/>
            <person name="Parker C."/>
            <person name="Breidt F."/>
            <person name="Broadbent J.R."/>
            <person name="Hutkins R."/>
            <person name="O'Sullivan D."/>
            <person name="Steele J."/>
            <person name="Unlu G."/>
            <person name="Saier M.H. Jr."/>
            <person name="Klaenhammer T."/>
            <person name="Richardson P."/>
            <person name="Kozyavkin S."/>
            <person name="Weimer B.C."/>
            <person name="Mills D.A."/>
        </authorList>
    </citation>
    <scope>NUCLEOTIDE SEQUENCE [LARGE SCALE GENOMIC DNA]</scope>
    <source>
        <strain>ATCC BAA-491 / LMD-9</strain>
    </source>
</reference>
<evidence type="ECO:0000255" key="1">
    <source>
        <dbReference type="HAMAP-Rule" id="MF_00514"/>
    </source>
</evidence>
<evidence type="ECO:0000256" key="2">
    <source>
        <dbReference type="SAM" id="MobiDB-lite"/>
    </source>
</evidence>
<evidence type="ECO:0000305" key="3"/>
<feature type="chain" id="PRO_1000050778" description="Large ribosomal subunit protein bL35">
    <location>
        <begin position="1"/>
        <end position="66"/>
    </location>
</feature>
<feature type="region of interest" description="Disordered" evidence="2">
    <location>
        <begin position="1"/>
        <end position="20"/>
    </location>
</feature>
<feature type="compositionally biased region" description="Basic residues" evidence="2">
    <location>
        <begin position="1"/>
        <end position="16"/>
    </location>
</feature>